<accession>Q04A20</accession>
<organism>
    <name type="scientific">Lactobacillus delbrueckii subsp. bulgaricus (strain ATCC BAA-365 / Lb-18)</name>
    <dbReference type="NCBI Taxonomy" id="321956"/>
    <lineage>
        <taxon>Bacteria</taxon>
        <taxon>Bacillati</taxon>
        <taxon>Bacillota</taxon>
        <taxon>Bacilli</taxon>
        <taxon>Lactobacillales</taxon>
        <taxon>Lactobacillaceae</taxon>
        <taxon>Lactobacillus</taxon>
    </lineage>
</organism>
<dbReference type="EMBL" id="CP000412">
    <property type="protein sequence ID" value="ABJ58702.1"/>
    <property type="molecule type" value="Genomic_DNA"/>
</dbReference>
<dbReference type="RefSeq" id="WP_011543965.1">
    <property type="nucleotide sequence ID" value="NC_008529.1"/>
</dbReference>
<dbReference type="SMR" id="Q04A20"/>
<dbReference type="KEGG" id="lbu:LBUL_1169"/>
<dbReference type="HOGENOM" id="CLU_038009_1_0_9"/>
<dbReference type="BioCyc" id="LDEL321956:LBUL_RS05470-MONOMER"/>
<dbReference type="GO" id="GO:0005829">
    <property type="term" value="C:cytosol"/>
    <property type="evidence" value="ECO:0007669"/>
    <property type="project" value="TreeGrafter"/>
</dbReference>
<dbReference type="GO" id="GO:0005886">
    <property type="term" value="C:plasma membrane"/>
    <property type="evidence" value="ECO:0007669"/>
    <property type="project" value="UniProtKB-SubCell"/>
</dbReference>
<dbReference type="GO" id="GO:0005525">
    <property type="term" value="F:GTP binding"/>
    <property type="evidence" value="ECO:0007669"/>
    <property type="project" value="UniProtKB-UniRule"/>
</dbReference>
<dbReference type="GO" id="GO:0003924">
    <property type="term" value="F:GTPase activity"/>
    <property type="evidence" value="ECO:0007669"/>
    <property type="project" value="UniProtKB-UniRule"/>
</dbReference>
<dbReference type="GO" id="GO:0043024">
    <property type="term" value="F:ribosomal small subunit binding"/>
    <property type="evidence" value="ECO:0007669"/>
    <property type="project" value="TreeGrafter"/>
</dbReference>
<dbReference type="GO" id="GO:0070181">
    <property type="term" value="F:small ribosomal subunit rRNA binding"/>
    <property type="evidence" value="ECO:0007669"/>
    <property type="project" value="UniProtKB-UniRule"/>
</dbReference>
<dbReference type="GO" id="GO:0000028">
    <property type="term" value="P:ribosomal small subunit assembly"/>
    <property type="evidence" value="ECO:0007669"/>
    <property type="project" value="TreeGrafter"/>
</dbReference>
<dbReference type="CDD" id="cd04163">
    <property type="entry name" value="Era"/>
    <property type="match status" value="1"/>
</dbReference>
<dbReference type="CDD" id="cd22534">
    <property type="entry name" value="KH-II_Era"/>
    <property type="match status" value="1"/>
</dbReference>
<dbReference type="FunFam" id="3.30.300.20:FF:000003">
    <property type="entry name" value="GTPase Era"/>
    <property type="match status" value="1"/>
</dbReference>
<dbReference type="FunFam" id="3.40.50.300:FF:000094">
    <property type="entry name" value="GTPase Era"/>
    <property type="match status" value="1"/>
</dbReference>
<dbReference type="Gene3D" id="3.30.300.20">
    <property type="match status" value="1"/>
</dbReference>
<dbReference type="Gene3D" id="3.40.50.300">
    <property type="entry name" value="P-loop containing nucleotide triphosphate hydrolases"/>
    <property type="match status" value="1"/>
</dbReference>
<dbReference type="HAMAP" id="MF_00367">
    <property type="entry name" value="GTPase_Era"/>
    <property type="match status" value="1"/>
</dbReference>
<dbReference type="InterPro" id="IPR030388">
    <property type="entry name" value="G_ERA_dom"/>
</dbReference>
<dbReference type="InterPro" id="IPR006073">
    <property type="entry name" value="GTP-bd"/>
</dbReference>
<dbReference type="InterPro" id="IPR005662">
    <property type="entry name" value="GTPase_Era-like"/>
</dbReference>
<dbReference type="InterPro" id="IPR015946">
    <property type="entry name" value="KH_dom-like_a/b"/>
</dbReference>
<dbReference type="InterPro" id="IPR004044">
    <property type="entry name" value="KH_dom_type_2"/>
</dbReference>
<dbReference type="InterPro" id="IPR009019">
    <property type="entry name" value="KH_sf_prok-type"/>
</dbReference>
<dbReference type="InterPro" id="IPR027417">
    <property type="entry name" value="P-loop_NTPase"/>
</dbReference>
<dbReference type="InterPro" id="IPR005225">
    <property type="entry name" value="Small_GTP-bd"/>
</dbReference>
<dbReference type="NCBIfam" id="TIGR00436">
    <property type="entry name" value="era"/>
    <property type="match status" value="1"/>
</dbReference>
<dbReference type="NCBIfam" id="NF000908">
    <property type="entry name" value="PRK00089.1"/>
    <property type="match status" value="1"/>
</dbReference>
<dbReference type="NCBIfam" id="TIGR00231">
    <property type="entry name" value="small_GTP"/>
    <property type="match status" value="1"/>
</dbReference>
<dbReference type="PANTHER" id="PTHR42698">
    <property type="entry name" value="GTPASE ERA"/>
    <property type="match status" value="1"/>
</dbReference>
<dbReference type="PANTHER" id="PTHR42698:SF1">
    <property type="entry name" value="GTPASE ERA, MITOCHONDRIAL"/>
    <property type="match status" value="1"/>
</dbReference>
<dbReference type="Pfam" id="PF07650">
    <property type="entry name" value="KH_2"/>
    <property type="match status" value="1"/>
</dbReference>
<dbReference type="Pfam" id="PF01926">
    <property type="entry name" value="MMR_HSR1"/>
    <property type="match status" value="1"/>
</dbReference>
<dbReference type="PRINTS" id="PR00326">
    <property type="entry name" value="GTP1OBG"/>
</dbReference>
<dbReference type="SUPFAM" id="SSF52540">
    <property type="entry name" value="P-loop containing nucleoside triphosphate hydrolases"/>
    <property type="match status" value="1"/>
</dbReference>
<dbReference type="SUPFAM" id="SSF54814">
    <property type="entry name" value="Prokaryotic type KH domain (KH-domain type II)"/>
    <property type="match status" value="1"/>
</dbReference>
<dbReference type="PROSITE" id="PS51713">
    <property type="entry name" value="G_ERA"/>
    <property type="match status" value="1"/>
</dbReference>
<dbReference type="PROSITE" id="PS50823">
    <property type="entry name" value="KH_TYPE_2"/>
    <property type="match status" value="1"/>
</dbReference>
<evidence type="ECO:0000255" key="1">
    <source>
        <dbReference type="HAMAP-Rule" id="MF_00367"/>
    </source>
</evidence>
<evidence type="ECO:0000255" key="2">
    <source>
        <dbReference type="PROSITE-ProRule" id="PRU01050"/>
    </source>
</evidence>
<name>ERA_LACDB</name>
<keyword id="KW-1003">Cell membrane</keyword>
<keyword id="KW-0963">Cytoplasm</keyword>
<keyword id="KW-0342">GTP-binding</keyword>
<keyword id="KW-0472">Membrane</keyword>
<keyword id="KW-0547">Nucleotide-binding</keyword>
<keyword id="KW-0690">Ribosome biogenesis</keyword>
<keyword id="KW-0694">RNA-binding</keyword>
<keyword id="KW-0699">rRNA-binding</keyword>
<sequence length="301" mass="34074">MGQTSKHKSGFVALVGRPNVGKSTLMNRLIGQKVAITSAKPQTTRNKISGIYTEDDMQVVFVDTPGIFKSHSDLDEYMDKASLSSLKDVDLVMFMVDAKEAGKGEEYVAGLLKDLDIPVFLVINKIDQVHPNELLPIIDSYQAVGKFAEFLPISARQGNGVDDLLKTLKDYLPEGPQYYASDEITDRPEYFVVAEMIREQILRLTDQEVPHSTAVWVDQMNQRINGKLQIDATIFVEKDGQKRIIIGQRGSMIKQIGMRSRKEIENLLGEKVNLKLWVKVRRDWRQDPAFLKSIGYDKKEL</sequence>
<protein>
    <recommendedName>
        <fullName evidence="1">GTPase Era</fullName>
    </recommendedName>
</protein>
<gene>
    <name evidence="1" type="primary">era</name>
    <name type="ordered locus">LBUL_1169</name>
</gene>
<comment type="function">
    <text evidence="1">An essential GTPase that binds both GDP and GTP, with rapid nucleotide exchange. Plays a role in 16S rRNA processing and 30S ribosomal subunit biogenesis and possibly also in cell cycle regulation and energy metabolism.</text>
</comment>
<comment type="subunit">
    <text evidence="1">Monomer.</text>
</comment>
<comment type="subcellular location">
    <subcellularLocation>
        <location>Cytoplasm</location>
    </subcellularLocation>
    <subcellularLocation>
        <location evidence="1">Cell membrane</location>
        <topology evidence="1">Peripheral membrane protein</topology>
    </subcellularLocation>
</comment>
<comment type="similarity">
    <text evidence="1 2">Belongs to the TRAFAC class TrmE-Era-EngA-EngB-Septin-like GTPase superfamily. Era GTPase family.</text>
</comment>
<feature type="chain" id="PRO_1000121337" description="GTPase Era">
    <location>
        <begin position="1"/>
        <end position="301"/>
    </location>
</feature>
<feature type="domain" description="Era-type G" evidence="2">
    <location>
        <begin position="8"/>
        <end position="174"/>
    </location>
</feature>
<feature type="domain" description="KH type-2" evidence="1">
    <location>
        <begin position="197"/>
        <end position="282"/>
    </location>
</feature>
<feature type="region of interest" description="G1" evidence="2">
    <location>
        <begin position="16"/>
        <end position="23"/>
    </location>
</feature>
<feature type="region of interest" description="G2" evidence="2">
    <location>
        <begin position="42"/>
        <end position="46"/>
    </location>
</feature>
<feature type="region of interest" description="G3" evidence="2">
    <location>
        <begin position="63"/>
        <end position="66"/>
    </location>
</feature>
<feature type="region of interest" description="G4" evidence="2">
    <location>
        <begin position="124"/>
        <end position="127"/>
    </location>
</feature>
<feature type="region of interest" description="G5" evidence="2">
    <location>
        <begin position="153"/>
        <end position="155"/>
    </location>
</feature>
<feature type="binding site" evidence="1">
    <location>
        <begin position="16"/>
        <end position="23"/>
    </location>
    <ligand>
        <name>GTP</name>
        <dbReference type="ChEBI" id="CHEBI:37565"/>
    </ligand>
</feature>
<feature type="binding site" evidence="1">
    <location>
        <begin position="63"/>
        <end position="67"/>
    </location>
    <ligand>
        <name>GTP</name>
        <dbReference type="ChEBI" id="CHEBI:37565"/>
    </ligand>
</feature>
<feature type="binding site" evidence="1">
    <location>
        <begin position="124"/>
        <end position="127"/>
    </location>
    <ligand>
        <name>GTP</name>
        <dbReference type="ChEBI" id="CHEBI:37565"/>
    </ligand>
</feature>
<reference key="1">
    <citation type="journal article" date="2006" name="Proc. Natl. Acad. Sci. U.S.A.">
        <title>Comparative genomics of the lactic acid bacteria.</title>
        <authorList>
            <person name="Makarova K.S."/>
            <person name="Slesarev A."/>
            <person name="Wolf Y.I."/>
            <person name="Sorokin A."/>
            <person name="Mirkin B."/>
            <person name="Koonin E.V."/>
            <person name="Pavlov A."/>
            <person name="Pavlova N."/>
            <person name="Karamychev V."/>
            <person name="Polouchine N."/>
            <person name="Shakhova V."/>
            <person name="Grigoriev I."/>
            <person name="Lou Y."/>
            <person name="Rohksar D."/>
            <person name="Lucas S."/>
            <person name="Huang K."/>
            <person name="Goodstein D.M."/>
            <person name="Hawkins T."/>
            <person name="Plengvidhya V."/>
            <person name="Welker D."/>
            <person name="Hughes J."/>
            <person name="Goh Y."/>
            <person name="Benson A."/>
            <person name="Baldwin K."/>
            <person name="Lee J.-H."/>
            <person name="Diaz-Muniz I."/>
            <person name="Dosti B."/>
            <person name="Smeianov V."/>
            <person name="Wechter W."/>
            <person name="Barabote R."/>
            <person name="Lorca G."/>
            <person name="Altermann E."/>
            <person name="Barrangou R."/>
            <person name="Ganesan B."/>
            <person name="Xie Y."/>
            <person name="Rawsthorne H."/>
            <person name="Tamir D."/>
            <person name="Parker C."/>
            <person name="Breidt F."/>
            <person name="Broadbent J.R."/>
            <person name="Hutkins R."/>
            <person name="O'Sullivan D."/>
            <person name="Steele J."/>
            <person name="Unlu G."/>
            <person name="Saier M.H. Jr."/>
            <person name="Klaenhammer T."/>
            <person name="Richardson P."/>
            <person name="Kozyavkin S."/>
            <person name="Weimer B.C."/>
            <person name="Mills D.A."/>
        </authorList>
    </citation>
    <scope>NUCLEOTIDE SEQUENCE [LARGE SCALE GENOMIC DNA]</scope>
    <source>
        <strain>ATCC BAA-365 / Lb-18</strain>
    </source>
</reference>
<proteinExistence type="inferred from homology"/>